<organism>
    <name type="scientific">Buchnera aphidicola subsp. Acyrthosiphon pisum (strain 5A)</name>
    <dbReference type="NCBI Taxonomy" id="563178"/>
    <lineage>
        <taxon>Bacteria</taxon>
        <taxon>Pseudomonadati</taxon>
        <taxon>Pseudomonadota</taxon>
        <taxon>Gammaproteobacteria</taxon>
        <taxon>Enterobacterales</taxon>
        <taxon>Erwiniaceae</taxon>
        <taxon>Buchnera</taxon>
    </lineage>
</organism>
<dbReference type="EC" id="6.3.2.8" evidence="1"/>
<dbReference type="EMBL" id="CP001161">
    <property type="protein sequence ID" value="ACL30584.1"/>
    <property type="molecule type" value="Genomic_DNA"/>
</dbReference>
<dbReference type="RefSeq" id="WP_009874172.1">
    <property type="nucleotide sequence ID" value="NC_011833.1"/>
</dbReference>
<dbReference type="SMR" id="B8D913"/>
<dbReference type="KEGG" id="bap:BUAP5A_211"/>
<dbReference type="HOGENOM" id="CLU_028104_2_2_6"/>
<dbReference type="OrthoDB" id="9804126at2"/>
<dbReference type="UniPathway" id="UPA00219"/>
<dbReference type="Proteomes" id="UP000006904">
    <property type="component" value="Chromosome"/>
</dbReference>
<dbReference type="GO" id="GO:0005737">
    <property type="term" value="C:cytoplasm"/>
    <property type="evidence" value="ECO:0007669"/>
    <property type="project" value="UniProtKB-SubCell"/>
</dbReference>
<dbReference type="GO" id="GO:0005524">
    <property type="term" value="F:ATP binding"/>
    <property type="evidence" value="ECO:0007669"/>
    <property type="project" value="UniProtKB-UniRule"/>
</dbReference>
<dbReference type="GO" id="GO:0008763">
    <property type="term" value="F:UDP-N-acetylmuramate-L-alanine ligase activity"/>
    <property type="evidence" value="ECO:0007669"/>
    <property type="project" value="UniProtKB-UniRule"/>
</dbReference>
<dbReference type="GO" id="GO:0051301">
    <property type="term" value="P:cell division"/>
    <property type="evidence" value="ECO:0007669"/>
    <property type="project" value="UniProtKB-KW"/>
</dbReference>
<dbReference type="GO" id="GO:0071555">
    <property type="term" value="P:cell wall organization"/>
    <property type="evidence" value="ECO:0007669"/>
    <property type="project" value="UniProtKB-KW"/>
</dbReference>
<dbReference type="GO" id="GO:0009252">
    <property type="term" value="P:peptidoglycan biosynthetic process"/>
    <property type="evidence" value="ECO:0007669"/>
    <property type="project" value="UniProtKB-UniRule"/>
</dbReference>
<dbReference type="GO" id="GO:0008360">
    <property type="term" value="P:regulation of cell shape"/>
    <property type="evidence" value="ECO:0007669"/>
    <property type="project" value="UniProtKB-KW"/>
</dbReference>
<dbReference type="Gene3D" id="3.90.190.20">
    <property type="entry name" value="Mur ligase, C-terminal domain"/>
    <property type="match status" value="1"/>
</dbReference>
<dbReference type="Gene3D" id="3.40.1190.10">
    <property type="entry name" value="Mur-like, catalytic domain"/>
    <property type="match status" value="1"/>
</dbReference>
<dbReference type="Gene3D" id="3.40.50.720">
    <property type="entry name" value="NAD(P)-binding Rossmann-like Domain"/>
    <property type="match status" value="1"/>
</dbReference>
<dbReference type="HAMAP" id="MF_00046">
    <property type="entry name" value="MurC"/>
    <property type="match status" value="1"/>
</dbReference>
<dbReference type="InterPro" id="IPR036565">
    <property type="entry name" value="Mur-like_cat_sf"/>
</dbReference>
<dbReference type="InterPro" id="IPR004101">
    <property type="entry name" value="Mur_ligase_C"/>
</dbReference>
<dbReference type="InterPro" id="IPR036615">
    <property type="entry name" value="Mur_ligase_C_dom_sf"/>
</dbReference>
<dbReference type="InterPro" id="IPR013221">
    <property type="entry name" value="Mur_ligase_cen"/>
</dbReference>
<dbReference type="InterPro" id="IPR000713">
    <property type="entry name" value="Mur_ligase_N"/>
</dbReference>
<dbReference type="InterPro" id="IPR050061">
    <property type="entry name" value="MurCDEF_pg_biosynth"/>
</dbReference>
<dbReference type="InterPro" id="IPR005758">
    <property type="entry name" value="UDP-N-AcMur_Ala_ligase_MurC"/>
</dbReference>
<dbReference type="NCBIfam" id="TIGR01082">
    <property type="entry name" value="murC"/>
    <property type="match status" value="1"/>
</dbReference>
<dbReference type="PANTHER" id="PTHR43445:SF3">
    <property type="entry name" value="UDP-N-ACETYLMURAMATE--L-ALANINE LIGASE"/>
    <property type="match status" value="1"/>
</dbReference>
<dbReference type="PANTHER" id="PTHR43445">
    <property type="entry name" value="UDP-N-ACETYLMURAMATE--L-ALANINE LIGASE-RELATED"/>
    <property type="match status" value="1"/>
</dbReference>
<dbReference type="Pfam" id="PF01225">
    <property type="entry name" value="Mur_ligase"/>
    <property type="match status" value="1"/>
</dbReference>
<dbReference type="Pfam" id="PF02875">
    <property type="entry name" value="Mur_ligase_C"/>
    <property type="match status" value="1"/>
</dbReference>
<dbReference type="Pfam" id="PF08245">
    <property type="entry name" value="Mur_ligase_M"/>
    <property type="match status" value="1"/>
</dbReference>
<dbReference type="SUPFAM" id="SSF51984">
    <property type="entry name" value="MurCD N-terminal domain"/>
    <property type="match status" value="1"/>
</dbReference>
<dbReference type="SUPFAM" id="SSF53623">
    <property type="entry name" value="MurD-like peptide ligases, catalytic domain"/>
    <property type="match status" value="1"/>
</dbReference>
<dbReference type="SUPFAM" id="SSF53244">
    <property type="entry name" value="MurD-like peptide ligases, peptide-binding domain"/>
    <property type="match status" value="1"/>
</dbReference>
<reference key="1">
    <citation type="journal article" date="2009" name="Science">
        <title>The dynamics and time scale of ongoing genomic erosion in symbiotic bacteria.</title>
        <authorList>
            <person name="Moran N.A."/>
            <person name="McLaughlin H.J."/>
            <person name="Sorek R."/>
        </authorList>
    </citation>
    <scope>NUCLEOTIDE SEQUENCE [LARGE SCALE GENOMIC DNA]</scope>
    <source>
        <strain>5A</strain>
    </source>
</reference>
<feature type="chain" id="PRO_1000117397" description="UDP-N-acetylmuramate--L-alanine ligase">
    <location>
        <begin position="1"/>
        <end position="484"/>
    </location>
</feature>
<feature type="binding site" evidence="1">
    <location>
        <begin position="125"/>
        <end position="131"/>
    </location>
    <ligand>
        <name>ATP</name>
        <dbReference type="ChEBI" id="CHEBI:30616"/>
    </ligand>
</feature>
<gene>
    <name evidence="1" type="primary">murC</name>
    <name type="ordered locus">BUAP5A_211</name>
</gene>
<sequence>MNIKDIKKINFFISEKKNKNIHLIGIGGAGMMGIALILLKLGYKVSGSDLLESLMIKKLINLGATIYLQHSEKNIKNVDFIIKSSAISSNNKEILAAKKRNIPILLRAEMIEILMSFKKGIAVSGTHGKTTTTSMIADIFIDSGLDPTVINGGLIKSINSYAKLGSSSYFITEADESDASFLYLNPNIIIVTNIEPDHIDHYDNSFKKLKQTFLIFLKKITLYGTAIVCIDNNAICDILTNLKCKIITYGFNKNADVRIFLYKQNNFIGHFYIILKNNKKLNIILNIPGKHNALNAAAAIALAIHEGINNDLMIASLKNFQGTCRRFEFLGFLSIDQGFDKRANCMLIDDYGHHPTELSETIKTIRISWPNKNLIMIFQPHRYTRTYNLYHDFVQTLSQVDVLLILHVYSANEKFIVGADSLSLFNDIKKLGKNYVTLISNHNMILDTLIQTLQGNDIILIQGAGNIDTIAHKILIKKTKKVIK</sequence>
<evidence type="ECO:0000255" key="1">
    <source>
        <dbReference type="HAMAP-Rule" id="MF_00046"/>
    </source>
</evidence>
<proteinExistence type="inferred from homology"/>
<name>MURC_BUCA5</name>
<keyword id="KW-0067">ATP-binding</keyword>
<keyword id="KW-0131">Cell cycle</keyword>
<keyword id="KW-0132">Cell division</keyword>
<keyword id="KW-0133">Cell shape</keyword>
<keyword id="KW-0961">Cell wall biogenesis/degradation</keyword>
<keyword id="KW-0963">Cytoplasm</keyword>
<keyword id="KW-0436">Ligase</keyword>
<keyword id="KW-0547">Nucleotide-binding</keyword>
<keyword id="KW-0573">Peptidoglycan synthesis</keyword>
<protein>
    <recommendedName>
        <fullName evidence="1">UDP-N-acetylmuramate--L-alanine ligase</fullName>
        <ecNumber evidence="1">6.3.2.8</ecNumber>
    </recommendedName>
    <alternativeName>
        <fullName evidence="1">UDP-N-acetylmuramoyl-L-alanine synthetase</fullName>
    </alternativeName>
</protein>
<comment type="function">
    <text evidence="1">Cell wall formation.</text>
</comment>
<comment type="catalytic activity">
    <reaction evidence="1">
        <text>UDP-N-acetyl-alpha-D-muramate + L-alanine + ATP = UDP-N-acetyl-alpha-D-muramoyl-L-alanine + ADP + phosphate + H(+)</text>
        <dbReference type="Rhea" id="RHEA:23372"/>
        <dbReference type="ChEBI" id="CHEBI:15378"/>
        <dbReference type="ChEBI" id="CHEBI:30616"/>
        <dbReference type="ChEBI" id="CHEBI:43474"/>
        <dbReference type="ChEBI" id="CHEBI:57972"/>
        <dbReference type="ChEBI" id="CHEBI:70757"/>
        <dbReference type="ChEBI" id="CHEBI:83898"/>
        <dbReference type="ChEBI" id="CHEBI:456216"/>
        <dbReference type="EC" id="6.3.2.8"/>
    </reaction>
</comment>
<comment type="pathway">
    <text evidence="1">Cell wall biogenesis; peptidoglycan biosynthesis.</text>
</comment>
<comment type="subcellular location">
    <subcellularLocation>
        <location evidence="1">Cytoplasm</location>
    </subcellularLocation>
</comment>
<comment type="similarity">
    <text evidence="1">Belongs to the MurCDEF family.</text>
</comment>
<accession>B8D913</accession>